<keyword id="KW-0046">Antibiotic resistance</keyword>
<keyword id="KW-0121">Carboxypeptidase</keyword>
<keyword id="KW-1003">Cell membrane</keyword>
<keyword id="KW-0133">Cell shape</keyword>
<keyword id="KW-0961">Cell wall biogenesis/degradation</keyword>
<keyword id="KW-0328">Glycosyltransferase</keyword>
<keyword id="KW-0378">Hydrolase</keyword>
<keyword id="KW-0472">Membrane</keyword>
<keyword id="KW-0511">Multifunctional enzyme</keyword>
<keyword id="KW-0573">Peptidoglycan synthesis</keyword>
<keyword id="KW-0645">Protease</keyword>
<keyword id="KW-1185">Reference proteome</keyword>
<keyword id="KW-0735">Signal-anchor</keyword>
<keyword id="KW-0808">Transferase</keyword>
<keyword id="KW-0812">Transmembrane</keyword>
<keyword id="KW-1133">Transmembrane helix</keyword>
<comment type="function">
    <text evidence="1">Cell wall formation. Synthesis of cross-linked peptidoglycan from the lipid intermediates. The enzyme has a penicillin-insensitive transglycosylase N-terminal domain (formation of linear glycan strands) and a penicillin-sensitive transpeptidase C-terminal domain (cross-linking of the peptide subunits).</text>
</comment>
<comment type="catalytic activity">
    <reaction evidence="2">
        <text>[GlcNAc-(1-&gt;4)-Mur2Ac(oyl-L-Ala-gamma-D-Glu-L-Lys-D-Ala-D-Ala)](n)-di-trans,octa-cis-undecaprenyl diphosphate + beta-D-GlcNAc-(1-&gt;4)-Mur2Ac(oyl-L-Ala-gamma-D-Glu-L-Lys-D-Ala-D-Ala)-di-trans,octa-cis-undecaprenyl diphosphate = [GlcNAc-(1-&gt;4)-Mur2Ac(oyl-L-Ala-gamma-D-Glu-L-Lys-D-Ala-D-Ala)](n+1)-di-trans,octa-cis-undecaprenyl diphosphate + di-trans,octa-cis-undecaprenyl diphosphate + H(+)</text>
        <dbReference type="Rhea" id="RHEA:23708"/>
        <dbReference type="Rhea" id="RHEA-COMP:9602"/>
        <dbReference type="Rhea" id="RHEA-COMP:9603"/>
        <dbReference type="ChEBI" id="CHEBI:15378"/>
        <dbReference type="ChEBI" id="CHEBI:58405"/>
        <dbReference type="ChEBI" id="CHEBI:60033"/>
        <dbReference type="ChEBI" id="CHEBI:78435"/>
        <dbReference type="EC" id="2.4.99.28"/>
    </reaction>
</comment>
<comment type="catalytic activity">
    <reaction evidence="2">
        <text>Preferential cleavage: (Ac)2-L-Lys-D-Ala-|-D-Ala. Also transpeptidation of peptidyl-alanyl moieties that are N-acyl substituents of D-alanine.</text>
        <dbReference type="EC" id="3.4.16.4"/>
    </reaction>
</comment>
<comment type="pathway">
    <text>Cell wall biogenesis; peptidoglycan biosynthesis.</text>
</comment>
<comment type="subcellular location">
    <subcellularLocation>
        <location evidence="6">Cell membrane</location>
        <topology evidence="6">Single-pass type II membrane protein</topology>
    </subcellularLocation>
</comment>
<comment type="similarity">
    <text evidence="6">In the N-terminal section; belongs to the glycosyltransferase 51 family.</text>
</comment>
<comment type="similarity">
    <text evidence="6">In the C-terminal section; belongs to the transpeptidase family.</text>
</comment>
<name>PBPA_CLOAB</name>
<evidence type="ECO:0000250" key="1"/>
<evidence type="ECO:0000250" key="2">
    <source>
        <dbReference type="UniProtKB" id="P02918"/>
    </source>
</evidence>
<evidence type="ECO:0000250" key="3">
    <source>
        <dbReference type="UniProtKB" id="P02919"/>
    </source>
</evidence>
<evidence type="ECO:0000255" key="4"/>
<evidence type="ECO:0000256" key="5">
    <source>
        <dbReference type="SAM" id="MobiDB-lite"/>
    </source>
</evidence>
<evidence type="ECO:0000305" key="6"/>
<proteinExistence type="inferred from homology"/>
<feature type="chain" id="PRO_0000321872" description="Penicillin-binding protein 1A">
    <location>
        <begin position="1"/>
        <end position="809"/>
    </location>
</feature>
<feature type="topological domain" description="Cytoplasmic" evidence="4">
    <location>
        <begin position="1"/>
        <end position="34"/>
    </location>
</feature>
<feature type="transmembrane region" description="Helical; Signal-anchor for type II membrane protein" evidence="4">
    <location>
        <begin position="35"/>
        <end position="55"/>
    </location>
</feature>
<feature type="topological domain" description="Extracellular" evidence="4">
    <location>
        <begin position="56"/>
        <end position="809"/>
    </location>
</feature>
<feature type="region of interest" description="Transglycosylase" evidence="1">
    <location>
        <begin position="74"/>
        <end position="251"/>
    </location>
</feature>
<feature type="region of interest" description="Transpeptidase" evidence="1">
    <location>
        <begin position="381"/>
        <end position="664"/>
    </location>
</feature>
<feature type="region of interest" description="Disordered" evidence="5">
    <location>
        <begin position="694"/>
        <end position="809"/>
    </location>
</feature>
<feature type="active site" description="Proton donor; for transglycosylase activity" evidence="3">
    <location>
        <position position="113"/>
    </location>
</feature>
<feature type="active site" description="Acyl-ester intermediate; for transpeptidase activity" evidence="3">
    <location>
        <position position="422"/>
    </location>
</feature>
<sequence>MSDNTKTNSRNKSVKRTKKVKKKKKFGFFKKLFTILFCLFILLSVAASGVIFAIVKTSPNLDINGTILNLDQPSQLYDDNNNPMDTVVTNQRRYVVSIKDMPKNLSNAFVSIEDERFYKHSGIDTKRILGAFYNDIKSKIHKQNSIQGASTITQQLIKNRMFLNDSLENRISFKRKIQEAYLSIKLEQSLSKSQILEAYMNTIFLGVQANGVEAASRQYFNKSAKDLNLIECAFIAGLAQSPSAYYPFSQNVAKNPNIYLDRTKLVLYKMRQNNYIDFSTYQNAINDLNNNKLAFSQQKISNKYTYEWFSIPVVNQVKQDLKSQYHYTDEEIDSLLRDGGLKIYTTMNTSMESNVQNILDNNSTLKSYSYADKNGIIQPEAAATLFDYHTGEIKAIVGGRGQQPPSSYNRADSSNYLRSVGSSIKPLTVYAPAIDTKLATEDTIVNDSPLSSDVAEKYGSNGVPYNPHNDDGGYSGPVNLKTALTKSINLVAIKLEDKLGLSTGAAYAQKFGLTLNNDDKSSIAALSLGEIRGSNTTTMAAAYGVFGNNGLYSEPRLYRKVVDKTGKVLLENNYSTRKVISPQSAYIMYDLLKGPVSAGGTGSYARFGDMPVAGKTGTASDSKNLWFCGLTPYYSAAVWVGNDQPTKLSLGSNDVAEIWGEIMKMANVNLTVKDIDAPGGVTKIGDSYYIDGTSPSNLSGDDSSSSTASKPQTPTTNTQNNTNNNVANPNSNNTTNSNTSNSTETPAQNTQQPTPTPTPSTNNTPGNTNTNTNTNNNTNTNTNTNNNNTNNSSSGNNNPPNNNTTNTNK</sequence>
<protein>
    <recommendedName>
        <fullName>Penicillin-binding protein 1A</fullName>
        <shortName>PBP1a</shortName>
    </recommendedName>
    <domain>
        <recommendedName>
            <fullName>Penicillin-insensitive transglycosylase</fullName>
            <ecNumber evidence="2">2.4.99.28</ecNumber>
        </recommendedName>
        <alternativeName>
            <fullName>Peptidoglycan TGase</fullName>
        </alternativeName>
    </domain>
    <domain>
        <recommendedName>
            <fullName>Penicillin-sensitive transpeptidase</fullName>
            <ecNumber evidence="2">3.4.16.4</ecNumber>
        </recommendedName>
        <alternativeName>
            <fullName>DD-transpeptidase</fullName>
        </alternativeName>
    </domain>
</protein>
<dbReference type="EC" id="2.4.99.28" evidence="2"/>
<dbReference type="EC" id="3.4.16.4" evidence="2"/>
<dbReference type="EMBL" id="AE001437">
    <property type="protein sequence ID" value="AAK80257.1"/>
    <property type="molecule type" value="Genomic_DNA"/>
</dbReference>
<dbReference type="PIR" id="F97183">
    <property type="entry name" value="F97183"/>
</dbReference>
<dbReference type="RefSeq" id="NP_348917.1">
    <property type="nucleotide sequence ID" value="NC_003030.1"/>
</dbReference>
<dbReference type="RefSeq" id="WP_010965598.1">
    <property type="nucleotide sequence ID" value="NC_003030.1"/>
</dbReference>
<dbReference type="SMR" id="Q97GR5"/>
<dbReference type="STRING" id="272562.CA_C2301"/>
<dbReference type="CAZy" id="GT51">
    <property type="family name" value="Glycosyltransferase Family 51"/>
</dbReference>
<dbReference type="MEROPS" id="X52.001"/>
<dbReference type="KEGG" id="cac:CA_C2301"/>
<dbReference type="PATRIC" id="fig|272562.8.peg.2498"/>
<dbReference type="eggNOG" id="COG0744">
    <property type="taxonomic scope" value="Bacteria"/>
</dbReference>
<dbReference type="HOGENOM" id="CLU_006354_2_2_9"/>
<dbReference type="OrthoDB" id="9766909at2"/>
<dbReference type="UniPathway" id="UPA00219"/>
<dbReference type="Proteomes" id="UP000000814">
    <property type="component" value="Chromosome"/>
</dbReference>
<dbReference type="GO" id="GO:0030288">
    <property type="term" value="C:outer membrane-bounded periplasmic space"/>
    <property type="evidence" value="ECO:0007669"/>
    <property type="project" value="TreeGrafter"/>
</dbReference>
<dbReference type="GO" id="GO:0005886">
    <property type="term" value="C:plasma membrane"/>
    <property type="evidence" value="ECO:0007669"/>
    <property type="project" value="UniProtKB-SubCell"/>
</dbReference>
<dbReference type="GO" id="GO:0008658">
    <property type="term" value="F:penicillin binding"/>
    <property type="evidence" value="ECO:0007669"/>
    <property type="project" value="InterPro"/>
</dbReference>
<dbReference type="GO" id="GO:0008955">
    <property type="term" value="F:peptidoglycan glycosyltransferase activity"/>
    <property type="evidence" value="ECO:0007669"/>
    <property type="project" value="TreeGrafter"/>
</dbReference>
<dbReference type="GO" id="GO:0009002">
    <property type="term" value="F:serine-type D-Ala-D-Ala carboxypeptidase activity"/>
    <property type="evidence" value="ECO:0007669"/>
    <property type="project" value="UniProtKB-EC"/>
</dbReference>
<dbReference type="GO" id="GO:0071555">
    <property type="term" value="P:cell wall organization"/>
    <property type="evidence" value="ECO:0007669"/>
    <property type="project" value="UniProtKB-KW"/>
</dbReference>
<dbReference type="GO" id="GO:0009252">
    <property type="term" value="P:peptidoglycan biosynthetic process"/>
    <property type="evidence" value="ECO:0007669"/>
    <property type="project" value="UniProtKB-UniPathway"/>
</dbReference>
<dbReference type="GO" id="GO:0006508">
    <property type="term" value="P:proteolysis"/>
    <property type="evidence" value="ECO:0007669"/>
    <property type="project" value="UniProtKB-KW"/>
</dbReference>
<dbReference type="GO" id="GO:0008360">
    <property type="term" value="P:regulation of cell shape"/>
    <property type="evidence" value="ECO:0007669"/>
    <property type="project" value="UniProtKB-KW"/>
</dbReference>
<dbReference type="GO" id="GO:0046677">
    <property type="term" value="P:response to antibiotic"/>
    <property type="evidence" value="ECO:0007669"/>
    <property type="project" value="UniProtKB-KW"/>
</dbReference>
<dbReference type="FunFam" id="1.10.3810.10:FF:000001">
    <property type="entry name" value="Penicillin-binding protein 1A"/>
    <property type="match status" value="1"/>
</dbReference>
<dbReference type="Gene3D" id="1.10.3810.10">
    <property type="entry name" value="Biosynthetic peptidoglycan transglycosylase-like"/>
    <property type="match status" value="1"/>
</dbReference>
<dbReference type="Gene3D" id="3.40.710.10">
    <property type="entry name" value="DD-peptidase/beta-lactamase superfamily"/>
    <property type="match status" value="1"/>
</dbReference>
<dbReference type="InterPro" id="IPR012338">
    <property type="entry name" value="Beta-lactam/transpept-like"/>
</dbReference>
<dbReference type="InterPro" id="IPR001264">
    <property type="entry name" value="Glyco_trans_51"/>
</dbReference>
<dbReference type="InterPro" id="IPR050396">
    <property type="entry name" value="Glycosyltr_51/Transpeptidase"/>
</dbReference>
<dbReference type="InterPro" id="IPR023346">
    <property type="entry name" value="Lysozyme-like_dom_sf"/>
</dbReference>
<dbReference type="InterPro" id="IPR036950">
    <property type="entry name" value="PBP_transglycosylase"/>
</dbReference>
<dbReference type="InterPro" id="IPR001460">
    <property type="entry name" value="PCN-bd_Tpept"/>
</dbReference>
<dbReference type="NCBIfam" id="TIGR02074">
    <property type="entry name" value="PBP_1a_fam"/>
    <property type="match status" value="1"/>
</dbReference>
<dbReference type="PANTHER" id="PTHR32282">
    <property type="entry name" value="BINDING PROTEIN TRANSPEPTIDASE, PUTATIVE-RELATED"/>
    <property type="match status" value="1"/>
</dbReference>
<dbReference type="PANTHER" id="PTHR32282:SF11">
    <property type="entry name" value="PENICILLIN-BINDING PROTEIN 1B"/>
    <property type="match status" value="1"/>
</dbReference>
<dbReference type="Pfam" id="PF00912">
    <property type="entry name" value="Transgly"/>
    <property type="match status" value="1"/>
</dbReference>
<dbReference type="Pfam" id="PF00905">
    <property type="entry name" value="Transpeptidase"/>
    <property type="match status" value="1"/>
</dbReference>
<dbReference type="SUPFAM" id="SSF56601">
    <property type="entry name" value="beta-lactamase/transpeptidase-like"/>
    <property type="match status" value="1"/>
</dbReference>
<dbReference type="SUPFAM" id="SSF53955">
    <property type="entry name" value="Lysozyme-like"/>
    <property type="match status" value="1"/>
</dbReference>
<accession>Q97GR5</accession>
<reference key="1">
    <citation type="journal article" date="2001" name="J. Bacteriol.">
        <title>Genome sequence and comparative analysis of the solvent-producing bacterium Clostridium acetobutylicum.</title>
        <authorList>
            <person name="Noelling J."/>
            <person name="Breton G."/>
            <person name="Omelchenko M.V."/>
            <person name="Makarova K.S."/>
            <person name="Zeng Q."/>
            <person name="Gibson R."/>
            <person name="Lee H.M."/>
            <person name="Dubois J."/>
            <person name="Qiu D."/>
            <person name="Hitti J."/>
            <person name="Wolf Y.I."/>
            <person name="Tatusov R.L."/>
            <person name="Sabathe F."/>
            <person name="Doucette-Stamm L.A."/>
            <person name="Soucaille P."/>
            <person name="Daly M.J."/>
            <person name="Bennett G.N."/>
            <person name="Koonin E.V."/>
            <person name="Smith D.R."/>
        </authorList>
    </citation>
    <scope>NUCLEOTIDE SEQUENCE [LARGE SCALE GENOMIC DNA]</scope>
    <source>
        <strain>ATCC 824 / DSM 792 / JCM 1419 / IAM 19013 / LMG 5710 / NBRC 13948 / NRRL B-527 / VKM B-1787 / 2291 / W</strain>
    </source>
</reference>
<organism>
    <name type="scientific">Clostridium acetobutylicum (strain ATCC 824 / DSM 792 / JCM 1419 / IAM 19013 / LMG 5710 / NBRC 13948 / NRRL B-527 / VKM B-1787 / 2291 / W)</name>
    <dbReference type="NCBI Taxonomy" id="272562"/>
    <lineage>
        <taxon>Bacteria</taxon>
        <taxon>Bacillati</taxon>
        <taxon>Bacillota</taxon>
        <taxon>Clostridia</taxon>
        <taxon>Eubacteriales</taxon>
        <taxon>Clostridiaceae</taxon>
        <taxon>Clostridium</taxon>
    </lineage>
</organism>
<gene>
    <name type="primary">pbpA</name>
    <name type="ordered locus">CA_C2301</name>
</gene>